<gene>
    <name evidence="1" type="primary">moaC</name>
    <name type="ordered locus">AF_2150</name>
</gene>
<organism>
    <name type="scientific">Archaeoglobus fulgidus (strain ATCC 49558 / DSM 4304 / JCM 9628 / NBRC 100126 / VC-16)</name>
    <dbReference type="NCBI Taxonomy" id="224325"/>
    <lineage>
        <taxon>Archaea</taxon>
        <taxon>Methanobacteriati</taxon>
        <taxon>Methanobacteriota</taxon>
        <taxon>Archaeoglobi</taxon>
        <taxon>Archaeoglobales</taxon>
        <taxon>Archaeoglobaceae</taxon>
        <taxon>Archaeoglobus</taxon>
    </lineage>
</organism>
<reference key="1">
    <citation type="journal article" date="1997" name="Nature">
        <title>The complete genome sequence of the hyperthermophilic, sulphate-reducing archaeon Archaeoglobus fulgidus.</title>
        <authorList>
            <person name="Klenk H.-P."/>
            <person name="Clayton R.A."/>
            <person name="Tomb J.-F."/>
            <person name="White O."/>
            <person name="Nelson K.E."/>
            <person name="Ketchum K.A."/>
            <person name="Dodson R.J."/>
            <person name="Gwinn M.L."/>
            <person name="Hickey E.K."/>
            <person name="Peterson J.D."/>
            <person name="Richardson D.L."/>
            <person name="Kerlavage A.R."/>
            <person name="Graham D.E."/>
            <person name="Kyrpides N.C."/>
            <person name="Fleischmann R.D."/>
            <person name="Quackenbush J."/>
            <person name="Lee N.H."/>
            <person name="Sutton G.G."/>
            <person name="Gill S.R."/>
            <person name="Kirkness E.F."/>
            <person name="Dougherty B.A."/>
            <person name="McKenney K."/>
            <person name="Adams M.D."/>
            <person name="Loftus B.J."/>
            <person name="Peterson S.N."/>
            <person name="Reich C.I."/>
            <person name="McNeil L.K."/>
            <person name="Badger J.H."/>
            <person name="Glodek A."/>
            <person name="Zhou L."/>
            <person name="Overbeek R."/>
            <person name="Gocayne J.D."/>
            <person name="Weidman J.F."/>
            <person name="McDonald L.A."/>
            <person name="Utterback T.R."/>
            <person name="Cotton M.D."/>
            <person name="Spriggs T."/>
            <person name="Artiach P."/>
            <person name="Kaine B.P."/>
            <person name="Sykes S.M."/>
            <person name="Sadow P.W."/>
            <person name="D'Andrea K.P."/>
            <person name="Bowman C."/>
            <person name="Fujii C."/>
            <person name="Garland S.A."/>
            <person name="Mason T.M."/>
            <person name="Olsen G.J."/>
            <person name="Fraser C.M."/>
            <person name="Smith H.O."/>
            <person name="Woese C.R."/>
            <person name="Venter J.C."/>
        </authorList>
    </citation>
    <scope>NUCLEOTIDE SEQUENCE [LARGE SCALE GENOMIC DNA]</scope>
    <source>
        <strain>ATCC 49558 / DSM 4304 / JCM 9628 / NBRC 100126 / VC-16</strain>
    </source>
</reference>
<name>MOAC_ARCFU</name>
<dbReference type="EC" id="4.6.1.17" evidence="1"/>
<dbReference type="EMBL" id="AE000782">
    <property type="protein sequence ID" value="AAB89105.1"/>
    <property type="molecule type" value="Genomic_DNA"/>
</dbReference>
<dbReference type="PIR" id="F69518">
    <property type="entry name" value="F69518"/>
</dbReference>
<dbReference type="RefSeq" id="WP_010879639.1">
    <property type="nucleotide sequence ID" value="NC_000917.1"/>
</dbReference>
<dbReference type="SMR" id="O28132"/>
<dbReference type="STRING" id="224325.AF_2150"/>
<dbReference type="PaxDb" id="224325-AF_2150"/>
<dbReference type="EnsemblBacteria" id="AAB89105">
    <property type="protein sequence ID" value="AAB89105"/>
    <property type="gene ID" value="AF_2150"/>
</dbReference>
<dbReference type="GeneID" id="1485379"/>
<dbReference type="KEGG" id="afu:AF_2150"/>
<dbReference type="eggNOG" id="arCOG01530">
    <property type="taxonomic scope" value="Archaea"/>
</dbReference>
<dbReference type="HOGENOM" id="CLU_074693_1_2_2"/>
<dbReference type="OrthoDB" id="10067at2157"/>
<dbReference type="PhylomeDB" id="O28132"/>
<dbReference type="UniPathway" id="UPA00344"/>
<dbReference type="Proteomes" id="UP000002199">
    <property type="component" value="Chromosome"/>
</dbReference>
<dbReference type="GO" id="GO:0061799">
    <property type="term" value="F:cyclic pyranopterin monophosphate synthase activity"/>
    <property type="evidence" value="ECO:0007669"/>
    <property type="project" value="UniProtKB-UniRule"/>
</dbReference>
<dbReference type="GO" id="GO:0006777">
    <property type="term" value="P:Mo-molybdopterin cofactor biosynthetic process"/>
    <property type="evidence" value="ECO:0007669"/>
    <property type="project" value="UniProtKB-UniRule"/>
</dbReference>
<dbReference type="CDD" id="cd01419">
    <property type="entry name" value="MoaC_A"/>
    <property type="match status" value="1"/>
</dbReference>
<dbReference type="Gene3D" id="3.30.70.640">
    <property type="entry name" value="Molybdopterin cofactor biosynthesis C (MoaC) domain"/>
    <property type="match status" value="1"/>
</dbReference>
<dbReference type="HAMAP" id="MF_01224_A">
    <property type="entry name" value="MoaC_A"/>
    <property type="match status" value="1"/>
</dbReference>
<dbReference type="InterPro" id="IPR023047">
    <property type="entry name" value="Mo_CF_biosynth-C_arc"/>
</dbReference>
<dbReference type="InterPro" id="IPR023045">
    <property type="entry name" value="MoaC"/>
</dbReference>
<dbReference type="InterPro" id="IPR036522">
    <property type="entry name" value="MoaC_sf"/>
</dbReference>
<dbReference type="InterPro" id="IPR050105">
    <property type="entry name" value="MoCo_biosynth_MoaA/MoaC"/>
</dbReference>
<dbReference type="InterPro" id="IPR002820">
    <property type="entry name" value="Mopterin_CF_biosynth-C_dom"/>
</dbReference>
<dbReference type="NCBIfam" id="TIGR00581">
    <property type="entry name" value="moaC"/>
    <property type="match status" value="1"/>
</dbReference>
<dbReference type="NCBIfam" id="NF006870">
    <property type="entry name" value="PRK09364.1"/>
    <property type="match status" value="1"/>
</dbReference>
<dbReference type="NCBIfam" id="NF008999">
    <property type="entry name" value="PRK12343.1"/>
    <property type="match status" value="1"/>
</dbReference>
<dbReference type="PANTHER" id="PTHR22960">
    <property type="entry name" value="MOLYBDOPTERIN COFACTOR SYNTHESIS PROTEIN A"/>
    <property type="match status" value="1"/>
</dbReference>
<dbReference type="Pfam" id="PF01967">
    <property type="entry name" value="MoaC"/>
    <property type="match status" value="1"/>
</dbReference>
<dbReference type="SUPFAM" id="SSF55040">
    <property type="entry name" value="Molybdenum cofactor biosynthesis protein C, MoaC"/>
    <property type="match status" value="1"/>
</dbReference>
<protein>
    <recommendedName>
        <fullName evidence="1">Probable cyclic pyranopterin monophosphate synthase</fullName>
        <ecNumber evidence="1">4.6.1.17</ecNumber>
    </recommendedName>
    <alternativeName>
        <fullName evidence="1">Molybdenum cofactor biosynthesis protein C</fullName>
    </alternativeName>
</protein>
<accession>O28132</accession>
<evidence type="ECO:0000255" key="1">
    <source>
        <dbReference type="HAMAP-Rule" id="MF_01224"/>
    </source>
</evidence>
<sequence length="156" mass="17101">MELTHIEDGKVRMVDVSHKDDVDRIAVAEGYIRLRSSTIEAIINKEVAKGNVIAAANIAGVMAVKKTPELIPMCHPIPITSVKFDFDIESVGIRVKCTVKSKGKTGVEMEALTGVSVALLTIWDMVKSLEKDERGNYPKTLIEVIRVVEKVKGGKE</sequence>
<proteinExistence type="inferred from homology"/>
<keyword id="KW-0456">Lyase</keyword>
<keyword id="KW-0501">Molybdenum cofactor biosynthesis</keyword>
<keyword id="KW-1185">Reference proteome</keyword>
<comment type="function">
    <text evidence="1">Catalyzes the conversion of (8S)-3',8-cyclo-7,8-dihydroguanosine 5'-triphosphate to cyclic pyranopterin monophosphate (cPMP).</text>
</comment>
<comment type="catalytic activity">
    <reaction evidence="1">
        <text>(8S)-3',8-cyclo-7,8-dihydroguanosine 5'-triphosphate = cyclic pyranopterin phosphate + diphosphate</text>
        <dbReference type="Rhea" id="RHEA:49580"/>
        <dbReference type="ChEBI" id="CHEBI:33019"/>
        <dbReference type="ChEBI" id="CHEBI:59648"/>
        <dbReference type="ChEBI" id="CHEBI:131766"/>
        <dbReference type="EC" id="4.6.1.17"/>
    </reaction>
</comment>
<comment type="pathway">
    <text evidence="1">Cofactor biosynthesis; molybdopterin biosynthesis.</text>
</comment>
<comment type="subunit">
    <text evidence="1">Homohexamer; trimer of dimers.</text>
</comment>
<comment type="similarity">
    <text evidence="1">Belongs to the MoaC family.</text>
</comment>
<feature type="chain" id="PRO_0000097851" description="Probable cyclic pyranopterin monophosphate synthase">
    <location>
        <begin position="1"/>
        <end position="156"/>
    </location>
</feature>
<feature type="active site" evidence="1">
    <location>
        <position position="124"/>
    </location>
</feature>
<feature type="binding site" evidence="1">
    <location>
        <begin position="73"/>
        <end position="75"/>
    </location>
    <ligand>
        <name>substrate</name>
    </ligand>
</feature>
<feature type="binding site" evidence="1">
    <location>
        <begin position="109"/>
        <end position="110"/>
    </location>
    <ligand>
        <name>substrate</name>
    </ligand>
</feature>